<feature type="chain" id="PRO_0000404152" description="Serine acetyltransferase">
    <location>
        <begin position="1"/>
        <end position="216"/>
    </location>
</feature>
<comment type="function">
    <text evidence="2">Catalyzes the acetylation of serine by acetyl-CoA to produce O-acetylserine (OAS).</text>
</comment>
<comment type="catalytic activity">
    <reaction evidence="2">
        <text>L-serine + acetyl-CoA = O-acetyl-L-serine + CoA</text>
        <dbReference type="Rhea" id="RHEA:24560"/>
        <dbReference type="ChEBI" id="CHEBI:33384"/>
        <dbReference type="ChEBI" id="CHEBI:57287"/>
        <dbReference type="ChEBI" id="CHEBI:57288"/>
        <dbReference type="ChEBI" id="CHEBI:58340"/>
        <dbReference type="EC" id="2.3.1.30"/>
    </reaction>
</comment>
<comment type="activity regulation">
    <text evidence="2">Inhibited by cysteine.</text>
</comment>
<comment type="pathway">
    <text evidence="2">Amino-acid biosynthesis; L-cysteine biosynthesis; L-cysteine from L-serine: step 1/2.</text>
</comment>
<comment type="subcellular location">
    <subcellularLocation>
        <location evidence="1">Cytoplasm</location>
    </subcellularLocation>
</comment>
<comment type="similarity">
    <text evidence="3">Belongs to the transferase hexapeptide repeat family.</text>
</comment>
<organism>
    <name type="scientific">Bacillus licheniformis (strain ATCC 14580 / DSM 13 / JCM 2505 / CCUG 7422 / NBRC 12200 / NCIMB 9375 / NCTC 10341 / NRRL NRS-1264 / Gibson 46)</name>
    <dbReference type="NCBI Taxonomy" id="279010"/>
    <lineage>
        <taxon>Bacteria</taxon>
        <taxon>Bacillati</taxon>
        <taxon>Bacillota</taxon>
        <taxon>Bacilli</taxon>
        <taxon>Bacillales</taxon>
        <taxon>Bacillaceae</taxon>
        <taxon>Bacillus</taxon>
    </lineage>
</organism>
<protein>
    <recommendedName>
        <fullName evidence="4">Serine acetyltransferase</fullName>
        <shortName evidence="2">SAT</shortName>
        <ecNumber>2.3.1.30</ecNumber>
    </recommendedName>
</protein>
<gene>
    <name evidence="5" type="primary">cysE</name>
    <name type="ordered locus">BLi00111</name>
    <name type="ordered locus">BL03268</name>
</gene>
<proteinExistence type="inferred from homology"/>
<name>CYSE_BACLD</name>
<dbReference type="EC" id="2.3.1.30"/>
<dbReference type="EMBL" id="AE017333">
    <property type="protein sequence ID" value="AAU39085.1"/>
    <property type="molecule type" value="Genomic_DNA"/>
</dbReference>
<dbReference type="EMBL" id="CP000002">
    <property type="protein sequence ID" value="AAU21741.1"/>
    <property type="molecule type" value="Genomic_DNA"/>
</dbReference>
<dbReference type="RefSeq" id="WP_003178282.1">
    <property type="nucleotide sequence ID" value="NC_006322.1"/>
</dbReference>
<dbReference type="SMR" id="Q65PC9"/>
<dbReference type="STRING" id="279010.BL03268"/>
<dbReference type="GeneID" id="92858925"/>
<dbReference type="KEGG" id="bld:BLi00111"/>
<dbReference type="KEGG" id="bli:BL03268"/>
<dbReference type="eggNOG" id="COG1045">
    <property type="taxonomic scope" value="Bacteria"/>
</dbReference>
<dbReference type="HOGENOM" id="CLU_051638_10_1_9"/>
<dbReference type="UniPathway" id="UPA00136">
    <property type="reaction ID" value="UER00199"/>
</dbReference>
<dbReference type="Proteomes" id="UP000000606">
    <property type="component" value="Chromosome"/>
</dbReference>
<dbReference type="GO" id="GO:0005737">
    <property type="term" value="C:cytoplasm"/>
    <property type="evidence" value="ECO:0007669"/>
    <property type="project" value="UniProtKB-SubCell"/>
</dbReference>
<dbReference type="GO" id="GO:0009001">
    <property type="term" value="F:serine O-acetyltransferase activity"/>
    <property type="evidence" value="ECO:0007669"/>
    <property type="project" value="UniProtKB-EC"/>
</dbReference>
<dbReference type="GO" id="GO:0006535">
    <property type="term" value="P:cysteine biosynthetic process from serine"/>
    <property type="evidence" value="ECO:0007669"/>
    <property type="project" value="InterPro"/>
</dbReference>
<dbReference type="CDD" id="cd03354">
    <property type="entry name" value="LbH_SAT"/>
    <property type="match status" value="1"/>
</dbReference>
<dbReference type="FunFam" id="1.10.3130.10:FF:000002">
    <property type="entry name" value="Serine acetyltransferase"/>
    <property type="match status" value="1"/>
</dbReference>
<dbReference type="FunFam" id="2.160.10.10:FF:000007">
    <property type="entry name" value="Serine acetyltransferase"/>
    <property type="match status" value="1"/>
</dbReference>
<dbReference type="Gene3D" id="2.160.10.10">
    <property type="entry name" value="Hexapeptide repeat proteins"/>
    <property type="match status" value="1"/>
</dbReference>
<dbReference type="Gene3D" id="1.10.3130.10">
    <property type="entry name" value="serine acetyltransferase, domain 1"/>
    <property type="match status" value="1"/>
</dbReference>
<dbReference type="InterPro" id="IPR001451">
    <property type="entry name" value="Hexapep"/>
</dbReference>
<dbReference type="InterPro" id="IPR045304">
    <property type="entry name" value="LbH_SAT"/>
</dbReference>
<dbReference type="InterPro" id="IPR042122">
    <property type="entry name" value="Ser_AcTrfase_N_sf"/>
</dbReference>
<dbReference type="InterPro" id="IPR005881">
    <property type="entry name" value="Ser_O-AcTrfase"/>
</dbReference>
<dbReference type="InterPro" id="IPR053376">
    <property type="entry name" value="Serine_acetyltransferase"/>
</dbReference>
<dbReference type="InterPro" id="IPR011004">
    <property type="entry name" value="Trimer_LpxA-like_sf"/>
</dbReference>
<dbReference type="NCBIfam" id="TIGR01172">
    <property type="entry name" value="cysE"/>
    <property type="match status" value="1"/>
</dbReference>
<dbReference type="NCBIfam" id="NF041874">
    <property type="entry name" value="EPS_EpsC"/>
    <property type="match status" value="1"/>
</dbReference>
<dbReference type="PANTHER" id="PTHR42811">
    <property type="entry name" value="SERINE ACETYLTRANSFERASE"/>
    <property type="match status" value="1"/>
</dbReference>
<dbReference type="Pfam" id="PF00132">
    <property type="entry name" value="Hexapep"/>
    <property type="match status" value="1"/>
</dbReference>
<dbReference type="PIRSF" id="PIRSF000441">
    <property type="entry name" value="CysE"/>
    <property type="match status" value="1"/>
</dbReference>
<dbReference type="SUPFAM" id="SSF51161">
    <property type="entry name" value="Trimeric LpxA-like enzymes"/>
    <property type="match status" value="1"/>
</dbReference>
<keyword id="KW-0012">Acyltransferase</keyword>
<keyword id="KW-0028">Amino-acid biosynthesis</keyword>
<keyword id="KW-0198">Cysteine biosynthesis</keyword>
<keyword id="KW-0963">Cytoplasm</keyword>
<keyword id="KW-1185">Reference proteome</keyword>
<keyword id="KW-0677">Repeat</keyword>
<keyword id="KW-0808">Transferase</keyword>
<reference evidence="5" key="1">
    <citation type="journal article" date="2004" name="J. Mol. Microbiol. Biotechnol.">
        <title>The complete genome sequence of Bacillus licheniformis DSM13, an organism with great industrial potential.</title>
        <authorList>
            <person name="Veith B."/>
            <person name="Herzberg C."/>
            <person name="Steckel S."/>
            <person name="Feesche J."/>
            <person name="Maurer K.H."/>
            <person name="Ehrenreich P."/>
            <person name="Baeumer S."/>
            <person name="Henne A."/>
            <person name="Liesegang H."/>
            <person name="Merkl R."/>
            <person name="Ehrenreich A."/>
            <person name="Gottschalk G."/>
        </authorList>
    </citation>
    <scope>NUCLEOTIDE SEQUENCE [LARGE SCALE GENOMIC DNA]</scope>
    <source>
        <strain>ATCC 14580 / DSM 13 / JCM 2505 / CCUG 7422 / NBRC 12200 / NCIMB 9375 / NCTC 10341 / NRRL NRS-1264 / Gibson 46</strain>
    </source>
</reference>
<reference evidence="4" key="2">
    <citation type="journal article" date="2004" name="Genome Biol.">
        <title>Complete genome sequence of the industrial bacterium Bacillus licheniformis and comparisons with closely related Bacillus species.</title>
        <authorList>
            <person name="Rey M.W."/>
            <person name="Ramaiya P."/>
            <person name="Nelson B.A."/>
            <person name="Brody-Karpin S.D."/>
            <person name="Zaretsky E.J."/>
            <person name="Tang M."/>
            <person name="Lopez de Leon A."/>
            <person name="Xiang H."/>
            <person name="Gusti V."/>
            <person name="Clausen I.G."/>
            <person name="Olsen P.B."/>
            <person name="Rasmussen M.D."/>
            <person name="Andersen J.T."/>
            <person name="Joergensen P.L."/>
            <person name="Larsen T.S."/>
            <person name="Sorokin A."/>
            <person name="Bolotin A."/>
            <person name="Lapidus A."/>
            <person name="Galleron N."/>
            <person name="Ehrlich S.D."/>
            <person name="Berka R.M."/>
        </authorList>
    </citation>
    <scope>NUCLEOTIDE SEQUENCE [LARGE SCALE GENOMIC DNA]</scope>
    <source>
        <strain>ATCC 14580 / DSM 13 / JCM 2505 / CCUG 7422 / NBRC 12200 / NCIMB 9375 / NCTC 10341 / NRRL NRS-1264 / Gibson 46</strain>
    </source>
</reference>
<accession>Q65PC9</accession>
<accession>Q62ZR7</accession>
<sequence length="216" mass="24124">MFFKMLKEDVDVVFDQDPAARSYIEVILTYSGLHAIWAHRIAHALYKRKRFFIARAISQIARFFTGIEIHPGAKIGRRFFIDHGMGVVIGETCEIGNNVTVFQGVTLGGTGKEKGKRHPTIEDDALISTGAKVLGSITVGRGAKIGAGSVVLHDVPECSTVVGIPGRVVVQNGKKIRRDLNHQDLPDPVADRFRELENEIRQLKQELRRKEREDEL</sequence>
<evidence type="ECO:0000250" key="1">
    <source>
        <dbReference type="UniProtKB" id="P0A9D4"/>
    </source>
</evidence>
<evidence type="ECO:0000250" key="2">
    <source>
        <dbReference type="UniProtKB" id="Q06750"/>
    </source>
</evidence>
<evidence type="ECO:0000255" key="3"/>
<evidence type="ECO:0000312" key="4">
    <source>
        <dbReference type="EMBL" id="AAU21741.1"/>
    </source>
</evidence>
<evidence type="ECO:0000312" key="5">
    <source>
        <dbReference type="EMBL" id="AAU39085.1"/>
    </source>
</evidence>